<protein>
    <recommendedName>
        <fullName evidence="1">Elongation factor P</fullName>
        <shortName evidence="1">EF-P</shortName>
    </recommendedName>
</protein>
<comment type="function">
    <text evidence="1">Involved in peptide bond synthesis. Stimulates efficient translation and peptide-bond synthesis on native or reconstituted 70S ribosomes in vitro. Probably functions indirectly by altering the affinity of the ribosome for aminoacyl-tRNA, thus increasing their reactivity as acceptors for peptidyl transferase.</text>
</comment>
<comment type="pathway">
    <text evidence="1">Protein biosynthesis; polypeptide chain elongation.</text>
</comment>
<comment type="subcellular location">
    <subcellularLocation>
        <location evidence="1">Cytoplasm</location>
    </subcellularLocation>
</comment>
<comment type="similarity">
    <text evidence="1">Belongs to the elongation factor P family.</text>
</comment>
<organism>
    <name type="scientific">Exiguobacterium sp. (strain ATCC BAA-1283 / AT1b)</name>
    <dbReference type="NCBI Taxonomy" id="360911"/>
    <lineage>
        <taxon>Bacteria</taxon>
        <taxon>Bacillati</taxon>
        <taxon>Bacillota</taxon>
        <taxon>Bacilli</taxon>
        <taxon>Bacillales</taxon>
        <taxon>Bacillales Family XII. Incertae Sedis</taxon>
        <taxon>Exiguobacterium</taxon>
    </lineage>
</organism>
<dbReference type="EMBL" id="CP001615">
    <property type="protein sequence ID" value="ACQ69458.1"/>
    <property type="molecule type" value="Genomic_DNA"/>
</dbReference>
<dbReference type="RefSeq" id="WP_012726577.1">
    <property type="nucleotide sequence ID" value="NC_012673.1"/>
</dbReference>
<dbReference type="SMR" id="C4L3G0"/>
<dbReference type="STRING" id="360911.EAT1b_0526"/>
<dbReference type="GeneID" id="94371862"/>
<dbReference type="KEGG" id="eat:EAT1b_0526"/>
<dbReference type="eggNOG" id="COG0231">
    <property type="taxonomic scope" value="Bacteria"/>
</dbReference>
<dbReference type="HOGENOM" id="CLU_074944_0_1_9"/>
<dbReference type="OrthoDB" id="9801844at2"/>
<dbReference type="UniPathway" id="UPA00345"/>
<dbReference type="Proteomes" id="UP000000716">
    <property type="component" value="Chromosome"/>
</dbReference>
<dbReference type="GO" id="GO:0005737">
    <property type="term" value="C:cytoplasm"/>
    <property type="evidence" value="ECO:0007669"/>
    <property type="project" value="UniProtKB-SubCell"/>
</dbReference>
<dbReference type="GO" id="GO:0003746">
    <property type="term" value="F:translation elongation factor activity"/>
    <property type="evidence" value="ECO:0007669"/>
    <property type="project" value="UniProtKB-UniRule"/>
</dbReference>
<dbReference type="GO" id="GO:0043043">
    <property type="term" value="P:peptide biosynthetic process"/>
    <property type="evidence" value="ECO:0007669"/>
    <property type="project" value="InterPro"/>
</dbReference>
<dbReference type="CDD" id="cd04470">
    <property type="entry name" value="S1_EF-P_repeat_1"/>
    <property type="match status" value="1"/>
</dbReference>
<dbReference type="CDD" id="cd05794">
    <property type="entry name" value="S1_EF-P_repeat_2"/>
    <property type="match status" value="1"/>
</dbReference>
<dbReference type="FunFam" id="2.30.30.30:FF:000003">
    <property type="entry name" value="Elongation factor P"/>
    <property type="match status" value="1"/>
</dbReference>
<dbReference type="FunFam" id="2.40.50.140:FF:000004">
    <property type="entry name" value="Elongation factor P"/>
    <property type="match status" value="1"/>
</dbReference>
<dbReference type="FunFam" id="2.40.50.140:FF:000009">
    <property type="entry name" value="Elongation factor P"/>
    <property type="match status" value="1"/>
</dbReference>
<dbReference type="Gene3D" id="2.30.30.30">
    <property type="match status" value="1"/>
</dbReference>
<dbReference type="Gene3D" id="2.40.50.140">
    <property type="entry name" value="Nucleic acid-binding proteins"/>
    <property type="match status" value="2"/>
</dbReference>
<dbReference type="HAMAP" id="MF_00141">
    <property type="entry name" value="EF_P"/>
    <property type="match status" value="1"/>
</dbReference>
<dbReference type="InterPro" id="IPR015365">
    <property type="entry name" value="Elong-fact-P_C"/>
</dbReference>
<dbReference type="InterPro" id="IPR012340">
    <property type="entry name" value="NA-bd_OB-fold"/>
</dbReference>
<dbReference type="InterPro" id="IPR014722">
    <property type="entry name" value="Rib_uL2_dom2"/>
</dbReference>
<dbReference type="InterPro" id="IPR020599">
    <property type="entry name" value="Transl_elong_fac_P/YeiP"/>
</dbReference>
<dbReference type="InterPro" id="IPR013185">
    <property type="entry name" value="Transl_elong_KOW-like"/>
</dbReference>
<dbReference type="InterPro" id="IPR001059">
    <property type="entry name" value="Transl_elong_P/YeiP_cen"/>
</dbReference>
<dbReference type="InterPro" id="IPR013852">
    <property type="entry name" value="Transl_elong_P/YeiP_CS"/>
</dbReference>
<dbReference type="InterPro" id="IPR011768">
    <property type="entry name" value="Transl_elongation_fac_P"/>
</dbReference>
<dbReference type="InterPro" id="IPR008991">
    <property type="entry name" value="Translation_prot_SH3-like_sf"/>
</dbReference>
<dbReference type="NCBIfam" id="TIGR00038">
    <property type="entry name" value="efp"/>
    <property type="match status" value="1"/>
</dbReference>
<dbReference type="NCBIfam" id="NF001810">
    <property type="entry name" value="PRK00529.1"/>
    <property type="match status" value="1"/>
</dbReference>
<dbReference type="PANTHER" id="PTHR30053">
    <property type="entry name" value="ELONGATION FACTOR P"/>
    <property type="match status" value="1"/>
</dbReference>
<dbReference type="PANTHER" id="PTHR30053:SF12">
    <property type="entry name" value="ELONGATION FACTOR P (EF-P) FAMILY PROTEIN"/>
    <property type="match status" value="1"/>
</dbReference>
<dbReference type="Pfam" id="PF01132">
    <property type="entry name" value="EFP"/>
    <property type="match status" value="1"/>
</dbReference>
<dbReference type="Pfam" id="PF08207">
    <property type="entry name" value="EFP_N"/>
    <property type="match status" value="1"/>
</dbReference>
<dbReference type="Pfam" id="PF09285">
    <property type="entry name" value="Elong-fact-P_C"/>
    <property type="match status" value="1"/>
</dbReference>
<dbReference type="PIRSF" id="PIRSF005901">
    <property type="entry name" value="EF-P"/>
    <property type="match status" value="1"/>
</dbReference>
<dbReference type="SMART" id="SM01185">
    <property type="entry name" value="EFP"/>
    <property type="match status" value="1"/>
</dbReference>
<dbReference type="SMART" id="SM00841">
    <property type="entry name" value="Elong-fact-P_C"/>
    <property type="match status" value="1"/>
</dbReference>
<dbReference type="SUPFAM" id="SSF50249">
    <property type="entry name" value="Nucleic acid-binding proteins"/>
    <property type="match status" value="2"/>
</dbReference>
<dbReference type="SUPFAM" id="SSF50104">
    <property type="entry name" value="Translation proteins SH3-like domain"/>
    <property type="match status" value="1"/>
</dbReference>
<dbReference type="PROSITE" id="PS01275">
    <property type="entry name" value="EFP"/>
    <property type="match status" value="1"/>
</dbReference>
<name>EFP_EXISA</name>
<proteinExistence type="inferred from homology"/>
<sequence>MVSVNDLKTGLTVKTSDGSIWQVIEFQHVKPGKGAAFVRTKMRNLRNGAIQETTFRGGEKIERAHIERKRMQYLYPMGDTYVFMDNESYEQLELTSAQVKSALPYLLENMEVSIADYEGEILGIELPTSVVLTIVEADPGVKGDTASNVKKNATVETGHVIQVPLFIEPGEKVTVDTRTGEFMGRYNG</sequence>
<reference key="1">
    <citation type="journal article" date="2011" name="J. Bacteriol.">
        <title>Complete genome sequence of the Thermophilic Bacterium Exiguobacterium sp. AT1b.</title>
        <authorList>
            <person name="Vishnivetskaya T.A."/>
            <person name="Lucas S."/>
            <person name="Copeland A."/>
            <person name="Lapidus A."/>
            <person name="Glavina del Rio T."/>
            <person name="Dalin E."/>
            <person name="Tice H."/>
            <person name="Bruce D.C."/>
            <person name="Goodwin L.A."/>
            <person name="Pitluck S."/>
            <person name="Saunders E."/>
            <person name="Brettin T."/>
            <person name="Detter C."/>
            <person name="Han C."/>
            <person name="Larimer F."/>
            <person name="Land M.L."/>
            <person name="Hauser L.J."/>
            <person name="Kyrpides N.C."/>
            <person name="Ovchinnikova G."/>
            <person name="Kathariou S."/>
            <person name="Ramaley R.F."/>
            <person name="Rodrigues D.F."/>
            <person name="Hendrix C."/>
            <person name="Richardson P."/>
            <person name="Tiedje J.M."/>
        </authorList>
    </citation>
    <scope>NUCLEOTIDE SEQUENCE [LARGE SCALE GENOMIC DNA]</scope>
    <source>
        <strain>ATCC BAA-1283 / AT1b</strain>
    </source>
</reference>
<evidence type="ECO:0000255" key="1">
    <source>
        <dbReference type="HAMAP-Rule" id="MF_00141"/>
    </source>
</evidence>
<keyword id="KW-0963">Cytoplasm</keyword>
<keyword id="KW-0251">Elongation factor</keyword>
<keyword id="KW-0648">Protein biosynthesis</keyword>
<gene>
    <name evidence="1" type="primary">efp</name>
    <name type="ordered locus">EAT1b_0526</name>
</gene>
<accession>C4L3G0</accession>
<feature type="chain" id="PRO_1000203269" description="Elongation factor P">
    <location>
        <begin position="1"/>
        <end position="188"/>
    </location>
</feature>